<proteinExistence type="inferred from homology"/>
<sequence length="451" mass="50578">MKWLKKQAELYPQKQFLNDSTFAQINQEVNKMAEHLAPLIDNQSRVALLSENSVEMAVVLFALLGLSKEVLLLNRHLTEYELADQIKELKIDKVFTSDLLTEKVTDSISFSEIWTSNPCPVSLSADFPDEKIAVIMNTSATTGKFKSVPITWGMISNHVKASKETLGAYDNDNWLVILPMFHVSGLSIIMRTLYNATSATVVDKFDENQLLEMINSGKINMVSLVPTLLTRIADKLHSNNLRLILLGGEFIPQPLIKKCQELGLPIYKTYGMTESFSQSVTFNILDFPDKTSSVGRPLPGVEIEIRQADLAGVGEIWLKSPMLMKAYLGQKPYGTAFETGDIGYLDTDGFLYLLNRRKDIIISGGENIYPKEIEDLVYSLPEIKECALVAKPDAKWGQVPILFVSGNISQEKLENFLTEKLAKYKRPQSITFMDELPKNASGKILRKELKG</sequence>
<feature type="chain" id="PRO_0000193161" description="2-succinylbenzoate--CoA ligase">
    <location>
        <begin position="1"/>
        <end position="451"/>
    </location>
</feature>
<organism>
    <name type="scientific">Lactococcus lactis subsp. lactis (strain IL1403)</name>
    <name type="common">Streptococcus lactis</name>
    <dbReference type="NCBI Taxonomy" id="272623"/>
    <lineage>
        <taxon>Bacteria</taxon>
        <taxon>Bacillati</taxon>
        <taxon>Bacillota</taxon>
        <taxon>Bacilli</taxon>
        <taxon>Lactobacillales</taxon>
        <taxon>Streptococcaceae</taxon>
        <taxon>Lactococcus</taxon>
    </lineage>
</organism>
<accession>Q9CHK3</accession>
<name>MENE_LACLA</name>
<dbReference type="EC" id="6.2.1.26" evidence="1"/>
<dbReference type="EMBL" id="AE005176">
    <property type="protein sequence ID" value="AAK04826.1"/>
    <property type="status" value="ALT_INIT"/>
    <property type="molecule type" value="Genomic_DNA"/>
</dbReference>
<dbReference type="PIR" id="H86715">
    <property type="entry name" value="H86715"/>
</dbReference>
<dbReference type="RefSeq" id="NP_266884.2">
    <property type="nucleotide sequence ID" value="NC_002662.1"/>
</dbReference>
<dbReference type="RefSeq" id="WP_010905533.1">
    <property type="nucleotide sequence ID" value="NC_002662.1"/>
</dbReference>
<dbReference type="SMR" id="Q9CHK3"/>
<dbReference type="PaxDb" id="272623-L0172"/>
<dbReference type="DNASU" id="1114354"/>
<dbReference type="EnsemblBacteria" id="AAK04826">
    <property type="protein sequence ID" value="AAK04826"/>
    <property type="gene ID" value="L0172"/>
</dbReference>
<dbReference type="KEGG" id="lla:L0172"/>
<dbReference type="PATRIC" id="fig|272623.7.peg.781"/>
<dbReference type="eggNOG" id="COG0318">
    <property type="taxonomic scope" value="Bacteria"/>
</dbReference>
<dbReference type="HOGENOM" id="CLU_000022_59_0_9"/>
<dbReference type="OrthoDB" id="9765680at2"/>
<dbReference type="UniPathway" id="UPA00079"/>
<dbReference type="UniPathway" id="UPA01057">
    <property type="reaction ID" value="UER00166"/>
</dbReference>
<dbReference type="Proteomes" id="UP000002196">
    <property type="component" value="Chromosome"/>
</dbReference>
<dbReference type="GO" id="GO:0005524">
    <property type="term" value="F:ATP binding"/>
    <property type="evidence" value="ECO:0007669"/>
    <property type="project" value="UniProtKB-KW"/>
</dbReference>
<dbReference type="GO" id="GO:0008756">
    <property type="term" value="F:o-succinylbenzoate-CoA ligase activity"/>
    <property type="evidence" value="ECO:0007669"/>
    <property type="project" value="UniProtKB-UniRule"/>
</dbReference>
<dbReference type="GO" id="GO:0009234">
    <property type="term" value="P:menaquinone biosynthetic process"/>
    <property type="evidence" value="ECO:0007669"/>
    <property type="project" value="UniProtKB-UniRule"/>
</dbReference>
<dbReference type="CDD" id="cd05912">
    <property type="entry name" value="OSB_CoA_lg"/>
    <property type="match status" value="1"/>
</dbReference>
<dbReference type="Gene3D" id="3.30.300.30">
    <property type="match status" value="1"/>
</dbReference>
<dbReference type="Gene3D" id="3.40.50.12780">
    <property type="entry name" value="N-terminal domain of ligase-like"/>
    <property type="match status" value="1"/>
</dbReference>
<dbReference type="HAMAP" id="MF_00731">
    <property type="entry name" value="MenE"/>
    <property type="match status" value="1"/>
</dbReference>
<dbReference type="InterPro" id="IPR025110">
    <property type="entry name" value="AMP-bd_C"/>
</dbReference>
<dbReference type="InterPro" id="IPR045851">
    <property type="entry name" value="AMP-bd_C_sf"/>
</dbReference>
<dbReference type="InterPro" id="IPR000873">
    <property type="entry name" value="AMP-dep_synth/lig_dom"/>
</dbReference>
<dbReference type="InterPro" id="IPR042099">
    <property type="entry name" value="ANL_N_sf"/>
</dbReference>
<dbReference type="InterPro" id="IPR050237">
    <property type="entry name" value="ATP-dep_AMP-bd_enzyme"/>
</dbReference>
<dbReference type="InterPro" id="IPR010192">
    <property type="entry name" value="MenE"/>
</dbReference>
<dbReference type="NCBIfam" id="TIGR01923">
    <property type="entry name" value="menE"/>
    <property type="match status" value="1"/>
</dbReference>
<dbReference type="PANTHER" id="PTHR43767">
    <property type="entry name" value="LONG-CHAIN-FATTY-ACID--COA LIGASE"/>
    <property type="match status" value="1"/>
</dbReference>
<dbReference type="PANTHER" id="PTHR43767:SF1">
    <property type="entry name" value="NONRIBOSOMAL PEPTIDE SYNTHASE PES1 (EUROFUNG)-RELATED"/>
    <property type="match status" value="1"/>
</dbReference>
<dbReference type="Pfam" id="PF00501">
    <property type="entry name" value="AMP-binding"/>
    <property type="match status" value="1"/>
</dbReference>
<dbReference type="Pfam" id="PF13193">
    <property type="entry name" value="AMP-binding_C"/>
    <property type="match status" value="1"/>
</dbReference>
<dbReference type="SUPFAM" id="SSF56801">
    <property type="entry name" value="Acetyl-CoA synthetase-like"/>
    <property type="match status" value="1"/>
</dbReference>
<protein>
    <recommendedName>
        <fullName evidence="1">2-succinylbenzoate--CoA ligase</fullName>
        <ecNumber evidence="1">6.2.1.26</ecNumber>
    </recommendedName>
    <alternativeName>
        <fullName evidence="1">o-succinylbenzoyl-CoA synthetase</fullName>
        <shortName evidence="1">OSB-CoA synthetase</shortName>
    </alternativeName>
</protein>
<gene>
    <name evidence="1" type="primary">menE</name>
    <name type="ordered locus">LL0728</name>
    <name type="ORF">L0172</name>
</gene>
<evidence type="ECO:0000255" key="1">
    <source>
        <dbReference type="HAMAP-Rule" id="MF_00731"/>
    </source>
</evidence>
<evidence type="ECO:0000305" key="2"/>
<comment type="function">
    <text evidence="1">Converts 2-succinylbenzoate (OSB) to 2-succinylbenzoyl-CoA (OSB-CoA).</text>
</comment>
<comment type="catalytic activity">
    <reaction evidence="1">
        <text>2-succinylbenzoate + ATP + CoA = 2-succinylbenzoyl-CoA + AMP + diphosphate</text>
        <dbReference type="Rhea" id="RHEA:17009"/>
        <dbReference type="ChEBI" id="CHEBI:18325"/>
        <dbReference type="ChEBI" id="CHEBI:30616"/>
        <dbReference type="ChEBI" id="CHEBI:33019"/>
        <dbReference type="ChEBI" id="CHEBI:57287"/>
        <dbReference type="ChEBI" id="CHEBI:57364"/>
        <dbReference type="ChEBI" id="CHEBI:456215"/>
        <dbReference type="EC" id="6.2.1.26"/>
    </reaction>
</comment>
<comment type="pathway">
    <text evidence="1">Quinol/quinone metabolism; 1,4-dihydroxy-2-naphthoate biosynthesis; 1,4-dihydroxy-2-naphthoate from chorismate: step 5/7.</text>
</comment>
<comment type="pathway">
    <text evidence="1">Quinol/quinone metabolism; menaquinone biosynthesis.</text>
</comment>
<comment type="similarity">
    <text evidence="1">Belongs to the ATP-dependent AMP-binding enzyme family. MenE subfamily.</text>
</comment>
<comment type="sequence caution" evidence="2">
    <conflict type="erroneous initiation">
        <sequence resource="EMBL-CDS" id="AAK04826"/>
    </conflict>
</comment>
<keyword id="KW-0067">ATP-binding</keyword>
<keyword id="KW-0436">Ligase</keyword>
<keyword id="KW-0474">Menaquinone biosynthesis</keyword>
<keyword id="KW-0547">Nucleotide-binding</keyword>
<keyword id="KW-1185">Reference proteome</keyword>
<reference key="1">
    <citation type="journal article" date="2001" name="Genome Res.">
        <title>The complete genome sequence of the lactic acid bacterium Lactococcus lactis ssp. lactis IL1403.</title>
        <authorList>
            <person name="Bolotin A."/>
            <person name="Wincker P."/>
            <person name="Mauger S."/>
            <person name="Jaillon O."/>
            <person name="Malarme K."/>
            <person name="Weissenbach J."/>
            <person name="Ehrlich S.D."/>
            <person name="Sorokin A."/>
        </authorList>
    </citation>
    <scope>NUCLEOTIDE SEQUENCE [LARGE SCALE GENOMIC DNA]</scope>
    <source>
        <strain>IL1403</strain>
    </source>
</reference>